<organism>
    <name type="scientific">Nematostella vectensis</name>
    <name type="common">Starlet sea anemone</name>
    <dbReference type="NCBI Taxonomy" id="45351"/>
    <lineage>
        <taxon>Eukaryota</taxon>
        <taxon>Metazoa</taxon>
        <taxon>Cnidaria</taxon>
        <taxon>Anthozoa</taxon>
        <taxon>Hexacorallia</taxon>
        <taxon>Actiniaria</taxon>
        <taxon>Edwardsiidae</taxon>
        <taxon>Nematostella</taxon>
    </lineage>
</organism>
<accession>A7RKS5</accession>
<feature type="initiator methionine" description="Removed" evidence="1">
    <location>
        <position position="1"/>
    </location>
</feature>
<feature type="chain" id="PRO_0000371596" description="Small ribosomal subunit protein uS2">
    <location>
        <begin position="2"/>
        <end position="310"/>
    </location>
</feature>
<feature type="region of interest" description="Disordered" evidence="2">
    <location>
        <begin position="213"/>
        <end position="240"/>
    </location>
</feature>
<feature type="region of interest" description="Disordered" evidence="2">
    <location>
        <begin position="271"/>
        <end position="310"/>
    </location>
</feature>
<feature type="compositionally biased region" description="Low complexity" evidence="2">
    <location>
        <begin position="216"/>
        <end position="227"/>
    </location>
</feature>
<feature type="compositionally biased region" description="Polar residues" evidence="2">
    <location>
        <begin position="297"/>
        <end position="310"/>
    </location>
</feature>
<proteinExistence type="inferred from homology"/>
<evidence type="ECO:0000255" key="1">
    <source>
        <dbReference type="HAMAP-Rule" id="MF_03015"/>
    </source>
</evidence>
<evidence type="ECO:0000256" key="2">
    <source>
        <dbReference type="SAM" id="MobiDB-lite"/>
    </source>
</evidence>
<evidence type="ECO:0000305" key="3"/>
<sequence length="310" mass="33681">MSGGLDILQLKEEDVVKFLAAGVHLGANNCDFQMEDYVYKRKSDGVNIINVKKTWEKLLLAARIIVTIENPADVCVISARPYGQRAILKYASHTGATPIAGRFTPGTFTNQIQAAFREPRLLIVCDPRIDHQPVTEASYVNIPVIAFCNTDSPLRHVDVAIPCNNKGIHSIGLMFWLLAREVLRMRGSISRALPWEIMPDLYFYRDPEEAEKEEQAALARQQEEANAGTTAGFSEWGGAAPWGADPMATAGIAPTIPAPFAATTPAVSADWDSVAPGATDDWGAEPAAPSSDWGTAVTMQEQAKPSTDWA</sequence>
<keyword id="KW-0963">Cytoplasm</keyword>
<keyword id="KW-1185">Reference proteome</keyword>
<keyword id="KW-0687">Ribonucleoprotein</keyword>
<keyword id="KW-0689">Ribosomal protein</keyword>
<protein>
    <recommendedName>
        <fullName evidence="1">Small ribosomal subunit protein uS2</fullName>
    </recommendedName>
    <alternativeName>
        <fullName evidence="3">40S ribosomal protein SA</fullName>
    </alternativeName>
</protein>
<comment type="function">
    <text evidence="1">Required for the assembly and/or stability of the 40S ribosomal subunit. Required for the processing of the 20S rRNA-precursor to mature 18S rRNA in a late step of the maturation of 40S ribosomal subunits.</text>
</comment>
<comment type="subunit">
    <text evidence="1">Component of the small ribosomal subunit. Mature ribosomes consist of a small (40S) and a large (60S) subunit. The 40S subunit contains about 33 different proteins and 1 molecule of RNA (18S). The 60S subunit contains about 49 different proteins and 3 molecules of RNA (28S, 5.8S and 5S). Interacts with ribosomal protein S21.</text>
</comment>
<comment type="subcellular location">
    <subcellularLocation>
        <location evidence="1">Cytoplasm</location>
    </subcellularLocation>
</comment>
<comment type="similarity">
    <text evidence="1">Belongs to the universal ribosomal protein uS2 family.</text>
</comment>
<name>RSSA_NEMVE</name>
<dbReference type="EMBL" id="DS469516">
    <property type="protein sequence ID" value="EDO48040.1"/>
    <property type="molecule type" value="Genomic_DNA"/>
</dbReference>
<dbReference type="RefSeq" id="XP_001640103.1">
    <property type="nucleotide sequence ID" value="XM_001640053.1"/>
</dbReference>
<dbReference type="SMR" id="A7RKS5"/>
<dbReference type="FunCoup" id="A7RKS5">
    <property type="interactions" value="720"/>
</dbReference>
<dbReference type="STRING" id="45351.A7RKS5"/>
<dbReference type="EnsemblMetazoa" id="EDO48040">
    <property type="protein sequence ID" value="EDO48040"/>
    <property type="gene ID" value="NEMVEDRAFT_v1g198553"/>
</dbReference>
<dbReference type="eggNOG" id="KOG0830">
    <property type="taxonomic scope" value="Eukaryota"/>
</dbReference>
<dbReference type="HOGENOM" id="CLU_058171_0_1_1"/>
<dbReference type="InParanoid" id="A7RKS5"/>
<dbReference type="OMA" id="VKNFFEP"/>
<dbReference type="PhylomeDB" id="A7RKS5"/>
<dbReference type="Proteomes" id="UP000001593">
    <property type="component" value="Unassembled WGS sequence"/>
</dbReference>
<dbReference type="GO" id="GO:0022627">
    <property type="term" value="C:cytosolic small ribosomal subunit"/>
    <property type="evidence" value="ECO:0000318"/>
    <property type="project" value="GO_Central"/>
</dbReference>
<dbReference type="GO" id="GO:0003735">
    <property type="term" value="F:structural constituent of ribosome"/>
    <property type="evidence" value="ECO:0000318"/>
    <property type="project" value="GO_Central"/>
</dbReference>
<dbReference type="GO" id="GO:0002181">
    <property type="term" value="P:cytoplasmic translation"/>
    <property type="evidence" value="ECO:0000318"/>
    <property type="project" value="GO_Central"/>
</dbReference>
<dbReference type="GO" id="GO:0000028">
    <property type="term" value="P:ribosomal small subunit assembly"/>
    <property type="evidence" value="ECO:0000318"/>
    <property type="project" value="GO_Central"/>
</dbReference>
<dbReference type="CDD" id="cd01425">
    <property type="entry name" value="RPS2"/>
    <property type="match status" value="1"/>
</dbReference>
<dbReference type="FunFam" id="3.40.50.10490:FF:000012">
    <property type="entry name" value="40S ribosomal protein SA"/>
    <property type="match status" value="1"/>
</dbReference>
<dbReference type="Gene3D" id="3.40.50.10490">
    <property type="entry name" value="Glucose-6-phosphate isomerase like protein, domain 1"/>
    <property type="match status" value="1"/>
</dbReference>
<dbReference type="HAMAP" id="MF_03015">
    <property type="entry name" value="Ribosomal_S2_euk"/>
    <property type="match status" value="1"/>
</dbReference>
<dbReference type="InterPro" id="IPR001865">
    <property type="entry name" value="Ribosomal_uS2"/>
</dbReference>
<dbReference type="InterPro" id="IPR032281">
    <property type="entry name" value="Ribosomal_uS2_C"/>
</dbReference>
<dbReference type="InterPro" id="IPR018130">
    <property type="entry name" value="Ribosomal_uS2_CS"/>
</dbReference>
<dbReference type="InterPro" id="IPR027498">
    <property type="entry name" value="Ribosomal_uS2_euk"/>
</dbReference>
<dbReference type="InterPro" id="IPR005707">
    <property type="entry name" value="Ribosomal_uS2_euk/arc"/>
</dbReference>
<dbReference type="InterPro" id="IPR023591">
    <property type="entry name" value="Ribosomal_uS2_flav_dom_sf"/>
</dbReference>
<dbReference type="NCBIfam" id="TIGR01012">
    <property type="entry name" value="uS2_euk_arch"/>
    <property type="match status" value="1"/>
</dbReference>
<dbReference type="PANTHER" id="PTHR11489">
    <property type="entry name" value="40S RIBOSOMAL PROTEIN SA"/>
    <property type="match status" value="1"/>
</dbReference>
<dbReference type="Pfam" id="PF16122">
    <property type="entry name" value="40S_SA_C"/>
    <property type="match status" value="1"/>
</dbReference>
<dbReference type="Pfam" id="PF00318">
    <property type="entry name" value="Ribosomal_S2"/>
    <property type="match status" value="2"/>
</dbReference>
<dbReference type="PRINTS" id="PR00395">
    <property type="entry name" value="RIBOSOMALS2"/>
</dbReference>
<dbReference type="SUPFAM" id="SSF52313">
    <property type="entry name" value="Ribosomal protein S2"/>
    <property type="match status" value="1"/>
</dbReference>
<dbReference type="PROSITE" id="PS00962">
    <property type="entry name" value="RIBOSOMAL_S2_1"/>
    <property type="match status" value="1"/>
</dbReference>
<dbReference type="PROSITE" id="PS00963">
    <property type="entry name" value="RIBOSOMAL_S2_2"/>
    <property type="match status" value="1"/>
</dbReference>
<gene>
    <name type="ORF">v1g198553</name>
</gene>
<reference key="1">
    <citation type="journal article" date="2007" name="Science">
        <title>Sea anemone genome reveals ancestral eumetazoan gene repertoire and genomic organization.</title>
        <authorList>
            <person name="Putnam N.H."/>
            <person name="Srivastava M."/>
            <person name="Hellsten U."/>
            <person name="Dirks B."/>
            <person name="Chapman J."/>
            <person name="Salamov A."/>
            <person name="Terry A."/>
            <person name="Shapiro H."/>
            <person name="Lindquist E."/>
            <person name="Kapitonov V.V."/>
            <person name="Jurka J."/>
            <person name="Genikhovich G."/>
            <person name="Grigoriev I.V."/>
            <person name="Lucas S.M."/>
            <person name="Steele R.E."/>
            <person name="Finnerty J.R."/>
            <person name="Technau U."/>
            <person name="Martindale M.Q."/>
            <person name="Rokhsar D.S."/>
        </authorList>
    </citation>
    <scope>NUCLEOTIDE SEQUENCE [LARGE SCALE GENOMIC DNA]</scope>
    <source>
        <strain>CH2 X CH6</strain>
    </source>
</reference>